<protein>
    <recommendedName>
        <fullName evidence="1">Na(+)/H(+) antiporter NhaA</fullName>
    </recommendedName>
    <alternativeName>
        <fullName evidence="1">Sodium/proton antiporter NhaA</fullName>
    </alternativeName>
</protein>
<dbReference type="EMBL" id="CP000112">
    <property type="protein sequence ID" value="ABB39567.1"/>
    <property type="molecule type" value="Genomic_DNA"/>
</dbReference>
<dbReference type="RefSeq" id="WP_011368586.1">
    <property type="nucleotide sequence ID" value="NC_007519.1"/>
</dbReference>
<dbReference type="SMR" id="Q30XM9"/>
<dbReference type="STRING" id="207559.Dde_2771"/>
<dbReference type="KEGG" id="dde:Dde_2771"/>
<dbReference type="eggNOG" id="COG3004">
    <property type="taxonomic scope" value="Bacteria"/>
</dbReference>
<dbReference type="HOGENOM" id="CLU_015803_1_2_7"/>
<dbReference type="Proteomes" id="UP000002710">
    <property type="component" value="Chromosome"/>
</dbReference>
<dbReference type="GO" id="GO:0005886">
    <property type="term" value="C:plasma membrane"/>
    <property type="evidence" value="ECO:0007669"/>
    <property type="project" value="UniProtKB-SubCell"/>
</dbReference>
<dbReference type="GO" id="GO:0015385">
    <property type="term" value="F:sodium:proton antiporter activity"/>
    <property type="evidence" value="ECO:0007669"/>
    <property type="project" value="TreeGrafter"/>
</dbReference>
<dbReference type="GO" id="GO:0006885">
    <property type="term" value="P:regulation of pH"/>
    <property type="evidence" value="ECO:0007669"/>
    <property type="project" value="InterPro"/>
</dbReference>
<dbReference type="Gene3D" id="1.20.1530.10">
    <property type="entry name" value="Na+/H+ antiporter like domain"/>
    <property type="match status" value="1"/>
</dbReference>
<dbReference type="HAMAP" id="MF_01844">
    <property type="entry name" value="NhaA"/>
    <property type="match status" value="1"/>
</dbReference>
<dbReference type="InterPro" id="IPR023171">
    <property type="entry name" value="Na/H_antiporter_dom_sf"/>
</dbReference>
<dbReference type="InterPro" id="IPR004670">
    <property type="entry name" value="NhaA"/>
</dbReference>
<dbReference type="NCBIfam" id="TIGR00773">
    <property type="entry name" value="NhaA"/>
    <property type="match status" value="1"/>
</dbReference>
<dbReference type="PANTHER" id="PTHR30341:SF0">
    <property type="entry name" value="NA(+)_H(+) ANTIPORTER NHAA"/>
    <property type="match status" value="1"/>
</dbReference>
<dbReference type="PANTHER" id="PTHR30341">
    <property type="entry name" value="SODIUM ION/PROTON ANTIPORTER NHAA-RELATED"/>
    <property type="match status" value="1"/>
</dbReference>
<dbReference type="Pfam" id="PF06965">
    <property type="entry name" value="Na_H_antiport_1"/>
    <property type="match status" value="1"/>
</dbReference>
<keyword id="KW-0050">Antiport</keyword>
<keyword id="KW-0997">Cell inner membrane</keyword>
<keyword id="KW-1003">Cell membrane</keyword>
<keyword id="KW-0406">Ion transport</keyword>
<keyword id="KW-0472">Membrane</keyword>
<keyword id="KW-1185">Reference proteome</keyword>
<keyword id="KW-0915">Sodium</keyword>
<keyword id="KW-0739">Sodium transport</keyword>
<keyword id="KW-0812">Transmembrane</keyword>
<keyword id="KW-1133">Transmembrane helix</keyword>
<keyword id="KW-0813">Transport</keyword>
<accession>Q30XM9</accession>
<comment type="function">
    <text evidence="1">Na(+)/H(+) antiporter that extrudes sodium in exchange for external protons.</text>
</comment>
<comment type="catalytic activity">
    <reaction evidence="1">
        <text>Na(+)(in) + 2 H(+)(out) = Na(+)(out) + 2 H(+)(in)</text>
        <dbReference type="Rhea" id="RHEA:29251"/>
        <dbReference type="ChEBI" id="CHEBI:15378"/>
        <dbReference type="ChEBI" id="CHEBI:29101"/>
    </reaction>
    <physiologicalReaction direction="left-to-right" evidence="1">
        <dbReference type="Rhea" id="RHEA:29252"/>
    </physiologicalReaction>
</comment>
<comment type="subcellular location">
    <subcellularLocation>
        <location evidence="1">Cell inner membrane</location>
        <topology evidence="1">Multi-pass membrane protein</topology>
    </subcellularLocation>
</comment>
<comment type="similarity">
    <text evidence="1">Belongs to the NhaA Na(+)/H(+) (TC 2.A.33) antiporter family.</text>
</comment>
<gene>
    <name evidence="1" type="primary">nhaA</name>
    <name type="ordered locus">Dde_2771</name>
</gene>
<proteinExistence type="inferred from homology"/>
<name>NHAA_OLEA2</name>
<feature type="chain" id="PRO_0000334277" description="Na(+)/H(+) antiporter NhaA">
    <location>
        <begin position="1"/>
        <end position="450"/>
    </location>
</feature>
<feature type="transmembrane region" description="Helical" evidence="1">
    <location>
        <begin position="24"/>
        <end position="44"/>
    </location>
</feature>
<feature type="transmembrane region" description="Helical" evidence="1">
    <location>
        <begin position="75"/>
        <end position="95"/>
    </location>
</feature>
<feature type="transmembrane region" description="Helical" evidence="1">
    <location>
        <begin position="111"/>
        <end position="131"/>
    </location>
</feature>
<feature type="transmembrane region" description="Helical" evidence="1">
    <location>
        <begin position="140"/>
        <end position="160"/>
    </location>
</feature>
<feature type="transmembrane region" description="Helical" evidence="1">
    <location>
        <begin position="169"/>
        <end position="189"/>
    </location>
</feature>
<feature type="transmembrane region" description="Helical" evidence="1">
    <location>
        <begin position="196"/>
        <end position="216"/>
    </location>
</feature>
<feature type="transmembrane region" description="Helical" evidence="1">
    <location>
        <begin position="224"/>
        <end position="244"/>
    </location>
</feature>
<feature type="transmembrane region" description="Helical" evidence="1">
    <location>
        <begin position="318"/>
        <end position="338"/>
    </location>
</feature>
<feature type="transmembrane region" description="Helical" evidence="1">
    <location>
        <begin position="352"/>
        <end position="372"/>
    </location>
</feature>
<feature type="transmembrane region" description="Helical" evidence="1">
    <location>
        <begin position="390"/>
        <end position="410"/>
    </location>
</feature>
<feature type="transmembrane region" description="Helical" evidence="1">
    <location>
        <begin position="422"/>
        <end position="442"/>
    </location>
</feature>
<organism>
    <name type="scientific">Oleidesulfovibrio alaskensis (strain ATCC BAA-1058 / DSM 17464 / G20)</name>
    <name type="common">Desulfovibrio alaskensis</name>
    <dbReference type="NCBI Taxonomy" id="207559"/>
    <lineage>
        <taxon>Bacteria</taxon>
        <taxon>Pseudomonadati</taxon>
        <taxon>Thermodesulfobacteriota</taxon>
        <taxon>Desulfovibrionia</taxon>
        <taxon>Desulfovibrionales</taxon>
        <taxon>Desulfovibrionaceae</taxon>
        <taxon>Oleidesulfovibrio</taxon>
    </lineage>
</organism>
<evidence type="ECO:0000255" key="1">
    <source>
        <dbReference type="HAMAP-Rule" id="MF_01844"/>
    </source>
</evidence>
<reference key="1">
    <citation type="journal article" date="2011" name="J. Bacteriol.">
        <title>Complete genome sequence and updated annotation of Desulfovibrio alaskensis G20.</title>
        <authorList>
            <person name="Hauser L.J."/>
            <person name="Land M.L."/>
            <person name="Brown S.D."/>
            <person name="Larimer F."/>
            <person name="Keller K.L."/>
            <person name="Rapp-Giles B.J."/>
            <person name="Price M.N."/>
            <person name="Lin M."/>
            <person name="Bruce D.C."/>
            <person name="Detter J.C."/>
            <person name="Tapia R."/>
            <person name="Han C.S."/>
            <person name="Goodwin L.A."/>
            <person name="Cheng J.F."/>
            <person name="Pitluck S."/>
            <person name="Copeland A."/>
            <person name="Lucas S."/>
            <person name="Nolan M."/>
            <person name="Lapidus A.L."/>
            <person name="Palumbo A.V."/>
            <person name="Wall J.D."/>
        </authorList>
    </citation>
    <scope>NUCLEOTIDE SEQUENCE [LARGE SCALE GENOMIC DNA]</scope>
    <source>
        <strain>ATCC BAA-1058 / DSM 17464 / G20</strain>
    </source>
</reference>
<sequence>MQHHDIPGAAPQPIDKLLAPFRRFFAIEASSGILLMAATVLALVWANSGFSASYHALWSNKVTVGFGDYALSKALILWINDGLMAIFFFVVGLEIKREILAGELASPRQAALPIAAAIGGMLVPAGIYLALNGGTAAASGWGVPMATDIAFALGILSLLGDRVPLSLKVFLTAVAIVDDLGAILVIAFFYTANLSFSFLMLGFAAFAVMLLLNWLGVRRVTPYLLVGLVLWFALLKSGVHATIAGVLGAMAIPARSALAPAVLRGTARQALSVFENALQGDTPVLASQDKSHAIHHVEMLTEKAGTPLQRLEHALHPWVAWFIMPVFALANAGVTVSAEMVSMLFEPLSLGIFFGLLLGKQGGVTLAVWLLVKTGIAKLPKGVGLGMYYGIGWLAGIGFTMAIFIATLAFEDPAHIEAAKMSILCASFVAGFGGYMLMRVLLRGREPEKA</sequence>